<dbReference type="EC" id="2.3.1.86" evidence="11"/>
<dbReference type="EC" id="3.1.2.14" evidence="2"/>
<dbReference type="EC" id="2.3.1.39" evidence="2"/>
<dbReference type="EC" id="4.2.1.59" evidence="2"/>
<dbReference type="EC" id="1.3.1.9" evidence="2"/>
<dbReference type="EC" id="2.3.1.38" evidence="2"/>
<dbReference type="EMBL" id="JX675043">
    <property type="protein sequence ID" value="AGL44430.1"/>
    <property type="molecule type" value="Genomic_DNA"/>
</dbReference>
<dbReference type="SMR" id="A0A1C8AX29"/>
<dbReference type="GO" id="GO:0005835">
    <property type="term" value="C:fatty acid synthase complex"/>
    <property type="evidence" value="ECO:0007669"/>
    <property type="project" value="InterPro"/>
</dbReference>
<dbReference type="GO" id="GO:0019171">
    <property type="term" value="F:(3R)-hydroxyacyl-[acyl-carrier-protein] dehydratase activity"/>
    <property type="evidence" value="ECO:0007669"/>
    <property type="project" value="UniProtKB-EC"/>
</dbReference>
<dbReference type="GO" id="GO:0004313">
    <property type="term" value="F:[acyl-carrier-protein] S-acetyltransferase activity"/>
    <property type="evidence" value="ECO:0007669"/>
    <property type="project" value="UniProtKB-EC"/>
</dbReference>
<dbReference type="GO" id="GO:0004314">
    <property type="term" value="F:[acyl-carrier-protein] S-malonyltransferase activity"/>
    <property type="evidence" value="ECO:0007669"/>
    <property type="project" value="UniProtKB-EC"/>
</dbReference>
<dbReference type="GO" id="GO:0004318">
    <property type="term" value="F:enoyl-[acyl-carrier-protein] reductase (NADH) activity"/>
    <property type="evidence" value="ECO:0007669"/>
    <property type="project" value="UniProtKB-EC"/>
</dbReference>
<dbReference type="GO" id="GO:0004312">
    <property type="term" value="F:fatty acid synthase activity"/>
    <property type="evidence" value="ECO:0007669"/>
    <property type="project" value="InterPro"/>
</dbReference>
<dbReference type="GO" id="GO:0016297">
    <property type="term" value="F:fatty acyl-[ACP] hydrolase activity"/>
    <property type="evidence" value="ECO:0007669"/>
    <property type="project" value="UniProtKB-EC"/>
</dbReference>
<dbReference type="GO" id="GO:0031409">
    <property type="term" value="F:pigment binding"/>
    <property type="evidence" value="ECO:0007669"/>
    <property type="project" value="UniProtKB-KW"/>
</dbReference>
<dbReference type="GO" id="GO:0006633">
    <property type="term" value="P:fatty acid biosynthetic process"/>
    <property type="evidence" value="ECO:0007669"/>
    <property type="project" value="InterPro"/>
</dbReference>
<dbReference type="CDD" id="cd03447">
    <property type="entry name" value="FAS_MaoC"/>
    <property type="match status" value="1"/>
</dbReference>
<dbReference type="FunFam" id="1.20.930.70:FF:000001">
    <property type="entry name" value="Fatty acid synthase beta subunit dehydratase"/>
    <property type="match status" value="1"/>
</dbReference>
<dbReference type="FunFam" id="3.20.20.70:FF:000078">
    <property type="entry name" value="Fatty acid synthase beta subunit dehydratase"/>
    <property type="match status" value="1"/>
</dbReference>
<dbReference type="FunFam" id="3.40.366.10:FF:000006">
    <property type="entry name" value="Fatty acid synthase beta subunit dehydratase"/>
    <property type="match status" value="1"/>
</dbReference>
<dbReference type="Gene3D" id="1.20.1050.120">
    <property type="match status" value="1"/>
</dbReference>
<dbReference type="Gene3D" id="1.20.930.70">
    <property type="match status" value="1"/>
</dbReference>
<dbReference type="Gene3D" id="3.30.1120.100">
    <property type="match status" value="1"/>
</dbReference>
<dbReference type="Gene3D" id="6.10.140.1400">
    <property type="match status" value="1"/>
</dbReference>
<dbReference type="Gene3D" id="6.10.60.10">
    <property type="match status" value="1"/>
</dbReference>
<dbReference type="Gene3D" id="6.20.240.10">
    <property type="match status" value="1"/>
</dbReference>
<dbReference type="Gene3D" id="3.20.20.70">
    <property type="entry name" value="Aldolase class I"/>
    <property type="match status" value="1"/>
</dbReference>
<dbReference type="Gene3D" id="3.10.129.10">
    <property type="entry name" value="Hotdog Thioesterase"/>
    <property type="match status" value="2"/>
</dbReference>
<dbReference type="Gene3D" id="3.40.366.10">
    <property type="entry name" value="Malonyl-Coenzyme A Acyl Carrier Protein, domain 2"/>
    <property type="match status" value="3"/>
</dbReference>
<dbReference type="InterPro" id="IPR001227">
    <property type="entry name" value="Ac_transferase_dom_sf"/>
</dbReference>
<dbReference type="InterPro" id="IPR014043">
    <property type="entry name" value="Acyl_transferase_dom"/>
</dbReference>
<dbReference type="InterPro" id="IPR016035">
    <property type="entry name" value="Acyl_Trfase/lysoPLipase"/>
</dbReference>
<dbReference type="InterPro" id="IPR013785">
    <property type="entry name" value="Aldolase_TIM"/>
</dbReference>
<dbReference type="InterPro" id="IPR039569">
    <property type="entry name" value="FAS1-like_DH_region"/>
</dbReference>
<dbReference type="InterPro" id="IPR016452">
    <property type="entry name" value="Fas1/AflB-like"/>
</dbReference>
<dbReference type="InterPro" id="IPR013565">
    <property type="entry name" value="Fas1/AflB-like_central"/>
</dbReference>
<dbReference type="InterPro" id="IPR041099">
    <property type="entry name" value="FAS1_N"/>
</dbReference>
<dbReference type="InterPro" id="IPR040883">
    <property type="entry name" value="FAS_meander"/>
</dbReference>
<dbReference type="InterPro" id="IPR003965">
    <property type="entry name" value="Fatty_acid_synthase"/>
</dbReference>
<dbReference type="InterPro" id="IPR050830">
    <property type="entry name" value="Fungal_FAS"/>
</dbReference>
<dbReference type="InterPro" id="IPR029069">
    <property type="entry name" value="HotDog_dom_sf"/>
</dbReference>
<dbReference type="InterPro" id="IPR002539">
    <property type="entry name" value="MaoC-like_dom"/>
</dbReference>
<dbReference type="InterPro" id="IPR032088">
    <property type="entry name" value="SAT"/>
</dbReference>
<dbReference type="PANTHER" id="PTHR10982:SF21">
    <property type="entry name" value="FATTY ACID SYNTHASE SUBUNIT BETA"/>
    <property type="match status" value="1"/>
</dbReference>
<dbReference type="PANTHER" id="PTHR10982">
    <property type="entry name" value="MALONYL COA-ACYL CARRIER PROTEIN TRANSACYLASE"/>
    <property type="match status" value="1"/>
</dbReference>
<dbReference type="Pfam" id="PF00698">
    <property type="entry name" value="Acyl_transf_1"/>
    <property type="match status" value="1"/>
</dbReference>
<dbReference type="Pfam" id="PF08354">
    <property type="entry name" value="Fas1-AflB-like_hel"/>
    <property type="match status" value="1"/>
</dbReference>
<dbReference type="Pfam" id="PF13452">
    <property type="entry name" value="FAS1_DH_region"/>
    <property type="match status" value="1"/>
</dbReference>
<dbReference type="Pfam" id="PF22235">
    <property type="entry name" value="FAS1_thioest_ins"/>
    <property type="match status" value="1"/>
</dbReference>
<dbReference type="Pfam" id="PF17951">
    <property type="entry name" value="FAS_meander"/>
    <property type="match status" value="1"/>
</dbReference>
<dbReference type="Pfam" id="PF17828">
    <property type="entry name" value="FAS_N"/>
    <property type="match status" value="1"/>
</dbReference>
<dbReference type="Pfam" id="PF01575">
    <property type="entry name" value="MaoC_dehydratas"/>
    <property type="match status" value="1"/>
</dbReference>
<dbReference type="Pfam" id="PF16073">
    <property type="entry name" value="SAT"/>
    <property type="match status" value="1"/>
</dbReference>
<dbReference type="PIRSF" id="PIRSF005562">
    <property type="entry name" value="FAS_yeast_beta"/>
    <property type="match status" value="1"/>
</dbReference>
<dbReference type="PRINTS" id="PR01483">
    <property type="entry name" value="FASYNTHASE"/>
</dbReference>
<dbReference type="SMART" id="SM00827">
    <property type="entry name" value="PKS_AT"/>
    <property type="match status" value="1"/>
</dbReference>
<dbReference type="SUPFAM" id="SSF52151">
    <property type="entry name" value="FabD/lysophospholipase-like"/>
    <property type="match status" value="2"/>
</dbReference>
<dbReference type="SUPFAM" id="SSF51412">
    <property type="entry name" value="Inosine monophosphate dehydrogenase (IMPDH)"/>
    <property type="match status" value="1"/>
</dbReference>
<dbReference type="SUPFAM" id="SSF54637">
    <property type="entry name" value="Thioesterase/thiol ester dehydrase-isomerase"/>
    <property type="match status" value="2"/>
</dbReference>
<keyword id="KW-0378">Hydrolase</keyword>
<keyword id="KW-0456">Lyase</keyword>
<keyword id="KW-0511">Multifunctional enzyme</keyword>
<keyword id="KW-0520">NAD</keyword>
<keyword id="KW-0521">NADP</keyword>
<keyword id="KW-0560">Oxidoreductase</keyword>
<keyword id="KW-0608">Pigment</keyword>
<keyword id="KW-0808">Transferase</keyword>
<evidence type="ECO:0000250" key="1">
    <source>
        <dbReference type="UniProtKB" id="P19097"/>
    </source>
</evidence>
<evidence type="ECO:0000250" key="2">
    <source>
        <dbReference type="UniProtKB" id="Q8TGA1"/>
    </source>
</evidence>
<evidence type="ECO:0000255" key="3"/>
<evidence type="ECO:0000255" key="4">
    <source>
        <dbReference type="PIRSR" id="PIRSR005562-1"/>
    </source>
</evidence>
<evidence type="ECO:0000269" key="5">
    <source>
    </source>
</evidence>
<evidence type="ECO:0000269" key="6">
    <source>
    </source>
</evidence>
<evidence type="ECO:0000269" key="7">
    <source>
    </source>
</evidence>
<evidence type="ECO:0000269" key="8">
    <source>
    </source>
</evidence>
<evidence type="ECO:0000269" key="9">
    <source>
    </source>
</evidence>
<evidence type="ECO:0000269" key="10">
    <source>
    </source>
</evidence>
<evidence type="ECO:0000269" key="11">
    <source>
    </source>
</evidence>
<evidence type="ECO:0000269" key="12">
    <source>
    </source>
</evidence>
<evidence type="ECO:0000269" key="13">
    <source>
    </source>
</evidence>
<evidence type="ECO:0000303" key="14">
    <source>
    </source>
</evidence>
<evidence type="ECO:0000303" key="15">
    <source ref="1"/>
</evidence>
<evidence type="ECO:0000305" key="16"/>
<protein>
    <recommendedName>
        <fullName evidence="14">Fatty acid synthase beta subunit pigK</fullName>
        <ecNumber evidence="11">2.3.1.86</ecNumber>
    </recommendedName>
    <alternativeName>
        <fullName evidence="2">S-acyl fatty acid synthase thioesterase</fullName>
        <ecNumber evidence="2">3.1.2.14</ecNumber>
    </alternativeName>
    <alternativeName>
        <fullName evidence="2">[Acyl-carrier-protein] malonyltransferase</fullName>
        <ecNumber evidence="2">2.3.1.39</ecNumber>
    </alternativeName>
    <domain>
        <recommendedName>
            <fullName evidence="2">3-hydroxyacyl-[acyl-carrier-protein] dehydratase</fullName>
            <ecNumber evidence="2">4.2.1.59</ecNumber>
        </recommendedName>
    </domain>
    <domain>
        <recommendedName>
            <fullName evidence="2">Enoyl-[acyl-carrier-protein] reductase [NADH]</fullName>
            <ecNumber evidence="2">1.3.1.9</ecNumber>
        </recommendedName>
    </domain>
    <domain>
        <recommendedName>
            <fullName evidence="2">[Acyl-carrier-protein] acetyltransferase</fullName>
            <ecNumber evidence="2">2.3.1.38</ecNumber>
        </recommendedName>
        <alternativeName>
            <fullName evidence="14">Azaphilone pigments biosynthesis cluster protein K</fullName>
        </alternativeName>
    </domain>
</protein>
<accession>A0A1C8AX29</accession>
<proteinExistence type="evidence at protein level"/>
<organism>
    <name type="scientific">Monascus ruber</name>
    <name type="common">Mold</name>
    <dbReference type="NCBI Taxonomy" id="89489"/>
    <lineage>
        <taxon>Eukaryota</taxon>
        <taxon>Fungi</taxon>
        <taxon>Dikarya</taxon>
        <taxon>Ascomycota</taxon>
        <taxon>Pezizomycotina</taxon>
        <taxon>Eurotiomycetes</taxon>
        <taxon>Eurotiomycetidae</taxon>
        <taxon>Eurotiales</taxon>
        <taxon>Aspergillaceae</taxon>
        <taxon>Monascus</taxon>
    </lineage>
</organism>
<reference key="1">
    <citation type="submission" date="2012-09" db="EMBL/GenBank/DDBJ databases">
        <title>Identification of fas2, encoding a fatty synthase responsible for Monascus pigments biosynthesis in Monascus ruber.</title>
        <authorList>
            <person name="Xie N."/>
            <person name="Liu Q."/>
            <person name="Chen F."/>
        </authorList>
    </citation>
    <scope>NUCLEOTIDE SEQUENCE [GENOMIC DNA]</scope>
    <source>
        <strain>M7</strain>
    </source>
</reference>
<reference key="2">
    <citation type="journal article" date="1977" name="Plant Physiol.">
        <title>Pigmentation and antibacterial activity of fast neutron- and X-ray-induced strains of Monascus purpureus went.</title>
        <authorList>
            <person name="Wong H.C."/>
            <person name="Bau Y.S."/>
        </authorList>
    </citation>
    <scope>BIOTECHNOLOGY</scope>
</reference>
<reference key="3">
    <citation type="journal article" date="2005" name="Chem. Biodivers.">
        <title>Anti-tumor-initiating effects of monascin, an azaphilonoid pigment from the extract of Monascus pilosus fermented rice (red-mold rice).</title>
        <authorList>
            <person name="Akihisa T."/>
            <person name="Tokuda H."/>
            <person name="Ukiya M."/>
            <person name="Kiyota A."/>
            <person name="Yasukawa K."/>
            <person name="Sakamoto N."/>
            <person name="Kimura Y."/>
            <person name="Suzuki T."/>
            <person name="Takayasu J."/>
            <person name="Nishino H."/>
        </authorList>
    </citation>
    <scope>BIOTECHNOLOGY</scope>
</reference>
<reference key="4">
    <citation type="journal article" date="2006" name="Appl. Microbiol. Biotechnol.">
        <title>In vivo hypolipidemic effects and safety of low dosage Monascus powder in a hamster model of hyperlipidemia.</title>
        <authorList>
            <person name="Lee C.L."/>
            <person name="Tsai T.Y."/>
            <person name="Wang J.J."/>
            <person name="Pan T.M."/>
        </authorList>
    </citation>
    <scope>BIOTECHNOLOGY</scope>
</reference>
<reference key="5">
    <citation type="journal article" date="2010" name="J. Agric. Food Chem.">
        <title>Monascin and ankaflavin act as novel hypolipidemic and high-density lipoprotein cholesterol-raising agents in red mold dioscorea.</title>
        <authorList>
            <person name="Lee C.L."/>
            <person name="Kung Y.H."/>
            <person name="Wu C.L."/>
            <person name="Hsu Y.W."/>
            <person name="Pan T.M."/>
        </authorList>
    </citation>
    <scope>BIOTECHNOLOGY</scope>
</reference>
<reference key="6">
    <citation type="journal article" date="2012" name="Appl. Microbiol. Biotechnol.">
        <title>Development of Monascus fermentation technology for high hypolipidemic effect.</title>
        <authorList>
            <person name="Lee C.L."/>
            <person name="Pan T.M."/>
        </authorList>
    </citation>
    <scope>BIOTECHNOLOGY</scope>
</reference>
<reference key="7">
    <citation type="journal article" date="2016" name="Appl. Microbiol. Biotechnol.">
        <title>Identification and role analysis of an intermediate produced by a polygenic mutant of Monascus pigments cluster in Monascus ruber M7.</title>
        <authorList>
            <person name="Liu J."/>
            <person name="Zhou Y."/>
            <person name="Yi T."/>
            <person name="Zhao M."/>
            <person name="Xie N."/>
            <person name="Lei M."/>
            <person name="Liu Q."/>
            <person name="Shao Y."/>
            <person name="Chen F."/>
        </authorList>
    </citation>
    <scope>FUNCTION</scope>
    <scope>PATHWAY</scope>
</reference>
<reference key="8">
    <citation type="journal article" date="2017" name="Chem. Sci.">
        <title>Orange, red, yellow: biosynthesis of azaphilone pigments in Monascus fungi.</title>
        <authorList>
            <person name="Chen W."/>
            <person name="Chen R."/>
            <person name="Liu Q."/>
            <person name="He Y."/>
            <person name="He K."/>
            <person name="Ding X."/>
            <person name="Kang L."/>
            <person name="Guo X."/>
            <person name="Xie N."/>
            <person name="Zhou Y."/>
            <person name="Lu Y."/>
            <person name="Cox R.J."/>
            <person name="Molnar I."/>
            <person name="Li M."/>
            <person name="Shao Y."/>
            <person name="Chen F."/>
        </authorList>
    </citation>
    <scope>FUNCTION</scope>
    <scope>DISRUPTION PHENOTYPE</scope>
    <scope>PATHWAY</scope>
</reference>
<reference key="9">
    <citation type="journal article" date="2021" name="Front. Microbiol.">
        <title>An integrated approach to determine the boundaries of the azaphilone pigment biosynthetic gene cluster of Monascus ruber M7 gown on potato dextrose agar.</title>
        <authorList>
            <person name="Liu Q."/>
            <person name="Zhong S."/>
            <person name="Wang X."/>
            <person name="Gao S."/>
            <person name="Yang X."/>
            <person name="Chen F."/>
            <person name="Molnar I."/>
        </authorList>
    </citation>
    <scope>FUNCTION</scope>
    <scope>INDUCTION</scope>
</reference>
<reference key="10">
    <citation type="journal article" date="2023" name="Food Res. Intern.">
        <title>Improved natural food colorant production in the filamentous fungus Monascus ruber using CRISPR-based engineering.</title>
        <authorList>
            <person name="Ree Yoon H."/>
            <person name="Han S."/>
            <person name="Chul Shin S."/>
            <person name="Cheong Yeom S."/>
            <person name="Jin Kim H."/>
        </authorList>
    </citation>
    <scope>BIOTECHNOLOGY</scope>
</reference>
<comment type="function">
    <text evidence="10 11 12">Fatty acid synthase subunit beta; part of the gene cluster that mediates the biosynthesis of azaphilone pigments (MonAzPs), a complex mixture of compounds with a common azaphilone skeleton very widely used as food colorants (PubMed:26946170, PubMed:28959415, PubMed:34220766). PigJ and pigK form the two subunits of a dedicated fungal fatty acid synthase (FAS) that produces the side chain fatty acyl moiety of MonAzPs, a beta-keto fatty acid. The chain length control of the pigJ-pigK FAS is somewhat flexible as MonAzPs features either a beta-ketooctanoic or a beta-ketodecanoic acid moiety. The beta-ketoacyl-ACP probably serves as the substrate for the acetyltransferase pigD that directly transfers the fatty acyl chain to the C-4 alcohol of the pyran ring (PubMed:28959415). The first step of the pathway is performed by the nrPKS pigA that forms the hexaketide precursor from successive condensations of five malonyl-CoA units, with a simple acetyl-CoA starter unit. The role of esterase pigG is not clear, but it may play at most a supplementary role in the formation of the benzaldehyde produced by the pigA nrPKS. This very reactive benzaldehyde is intercepted by the pigC ketoreductase that to provide the first stable enzyme-free MonAzPs intermediate, 6-(4-hydroxy-2-oxopentyl)-3-methyl-2,4-dioxocyclohexane carbaldehyde, also known as M7PKS-1. The FAD-dependent monooxygenase pigN hydroxylates M7PKS-1 at C-4, which triggers the formation of the pyran ring. PigJ, pigK and pigD are involved in the acetylation of the pyran ring. PigJ and pigK form the two subunits of a dedicated fungal FAS that produces the side chain fatty acyl moiety of MonAzPs and pigD transfers the fatty acyl chain to the C-4 alcohol. PigM and pigO are involved in the elimination of the omega-1 alcohol. PigM acts as an O-acetyltransferase that synthesizes the putative O-11 acetyl intermediate whereas pigO eliminates acetic acid to yield an intermediate with a C10(11) double bond. The dehydration of the C-11 alcohol followed by the reduction of the C6(7) double bond by the NAD(P)H-dependent oxidoreductase pigE increases the electrophilicity of the C-5 ketone of the resulting acyl benzopyran. This in turn sets up the C-5 ketone for an intramolecular Knoevenagel aldol condensation with the C-20 enol of the side chain. This condensation affords the characteristic linear tricyclic carbon skeletons of the yellow pigments that serve as the common precursors for the classical yellow pigments monascin and ankaflavin, orange pigments rubopunctatin and monascorubrin, and red pigments ribropunctamine and monascorubramine. The FAD-dependent oxidoreductase pigF is especially invoved in the biosynthesis of orange and red pigments via desaturation of C6(7) (PubMed:28959415).</text>
</comment>
<comment type="catalytic activity">
    <reaction evidence="2">
        <text>acetyl-CoA + n malonyl-CoA + 2n NADPH + 4n H(+) = a long-chain-acyl-CoA + n CoA + n CO2 + 2n NADP(+).</text>
        <dbReference type="EC" id="2.3.1.86"/>
    </reaction>
</comment>
<comment type="catalytic activity">
    <reaction evidence="2">
        <text>holo-[ACP] + acetyl-CoA = acetyl-[ACP] + CoA</text>
        <dbReference type="Rhea" id="RHEA:41788"/>
        <dbReference type="Rhea" id="RHEA-COMP:9621"/>
        <dbReference type="Rhea" id="RHEA-COMP:9685"/>
        <dbReference type="ChEBI" id="CHEBI:57287"/>
        <dbReference type="ChEBI" id="CHEBI:57288"/>
        <dbReference type="ChEBI" id="CHEBI:64479"/>
        <dbReference type="ChEBI" id="CHEBI:78446"/>
        <dbReference type="EC" id="2.3.1.38"/>
    </reaction>
</comment>
<comment type="catalytic activity">
    <reaction evidence="2">
        <text>holo-[ACP] + malonyl-CoA = malonyl-[ACP] + CoA</text>
        <dbReference type="Rhea" id="RHEA:41792"/>
        <dbReference type="Rhea" id="RHEA-COMP:9623"/>
        <dbReference type="Rhea" id="RHEA-COMP:9685"/>
        <dbReference type="ChEBI" id="CHEBI:57287"/>
        <dbReference type="ChEBI" id="CHEBI:57384"/>
        <dbReference type="ChEBI" id="CHEBI:64479"/>
        <dbReference type="ChEBI" id="CHEBI:78449"/>
        <dbReference type="EC" id="2.3.1.39"/>
    </reaction>
</comment>
<comment type="catalytic activity">
    <reaction evidence="2">
        <text>a (3R)-hydroxyacyl-[ACP] = a (2E)-enoyl-[ACP] + H2O</text>
        <dbReference type="Rhea" id="RHEA:13097"/>
        <dbReference type="Rhea" id="RHEA-COMP:9925"/>
        <dbReference type="Rhea" id="RHEA-COMP:9945"/>
        <dbReference type="ChEBI" id="CHEBI:15377"/>
        <dbReference type="ChEBI" id="CHEBI:78784"/>
        <dbReference type="ChEBI" id="CHEBI:78827"/>
        <dbReference type="EC" id="4.2.1.59"/>
    </reaction>
</comment>
<comment type="catalytic activity">
    <reaction evidence="2">
        <text>a 2,3-saturated acyl-[ACP] + NAD(+) = a (2E)-enoyl-[ACP] + NADH + H(+)</text>
        <dbReference type="Rhea" id="RHEA:10240"/>
        <dbReference type="Rhea" id="RHEA-COMP:9925"/>
        <dbReference type="Rhea" id="RHEA-COMP:9926"/>
        <dbReference type="ChEBI" id="CHEBI:15378"/>
        <dbReference type="ChEBI" id="CHEBI:57540"/>
        <dbReference type="ChEBI" id="CHEBI:57945"/>
        <dbReference type="ChEBI" id="CHEBI:78784"/>
        <dbReference type="ChEBI" id="CHEBI:78785"/>
        <dbReference type="EC" id="1.3.1.9"/>
    </reaction>
</comment>
<comment type="catalytic activity">
    <reaction evidence="2">
        <text>(9Z)-octadecenoyl-[ACP] + H2O = (9Z)-octadecenoate + holo-[ACP] + H(+)</text>
        <dbReference type="Rhea" id="RHEA:15057"/>
        <dbReference type="Rhea" id="RHEA-COMP:9685"/>
        <dbReference type="Rhea" id="RHEA-COMP:9924"/>
        <dbReference type="ChEBI" id="CHEBI:15377"/>
        <dbReference type="ChEBI" id="CHEBI:15378"/>
        <dbReference type="ChEBI" id="CHEBI:30823"/>
        <dbReference type="ChEBI" id="CHEBI:64479"/>
        <dbReference type="ChEBI" id="CHEBI:78783"/>
        <dbReference type="EC" id="3.1.2.14"/>
    </reaction>
</comment>
<comment type="pathway">
    <text evidence="10 11">Secondary metabolite biosynthesis.</text>
</comment>
<comment type="subunit">
    <text evidence="1">[Alpha(6)beta(6)] hexamers of two multifunctional subunits (alpha and beta).</text>
</comment>
<comment type="induction">
    <text evidence="12">Expression does not seem to be regulated by the azaphilone pigments (MonAzPs) gene cluster-specific transcription regulator pigB.</text>
</comment>
<comment type="disruption phenotype">
    <text evidence="11">Leads to the accumulation of pyran intermediates devoid of the medium-chain fatty acyl moiety such as monascusone A.</text>
</comment>
<comment type="biotechnology">
    <text evidence="5 6 7 8 9 13">As colorants, MonAzPs are widely used in various food products for centuries (PubMed:37087240). Moreover, MonAzPs also possess wide-ranging biological activities such as antibacterial activity, preventing hypertension, lowering cholesterol levels, causing hypolipidemic effects, and displaying antiobesity and antitumor activities (PubMed:16283302, PubMed:16660141, PubMed:17191930, PubMed:20666456, PubMed:22562164).</text>
</comment>
<comment type="similarity">
    <text evidence="16">Belongs to the fungal fatty acid synthetase subunit beta family.</text>
</comment>
<gene>
    <name evidence="14" type="primary">pigK</name>
    <name evidence="15" type="synonym">fas2</name>
</gene>
<name>PIGK_MONRU</name>
<feature type="chain" id="PRO_0000460204" description="Fatty acid synthase beta subunit pigK">
    <location>
        <begin position="1"/>
        <end position="2014"/>
    </location>
</feature>
<feature type="domain" description="MaoC-like" evidence="3">
    <location>
        <begin position="1514"/>
        <end position="1627"/>
    </location>
</feature>
<feature type="region of interest" description="Acetyltransferase (AT) domain" evidence="3">
    <location>
        <begin position="144"/>
        <end position="515"/>
    </location>
</feature>
<feature type="region of interest" description="Enoyl reductase (ER) domain" evidence="3">
    <location>
        <begin position="570"/>
        <end position="815"/>
    </location>
</feature>
<feature type="region of interest" description="Dehydratase (DH) domain" evidence="3">
    <location>
        <begin position="1126"/>
        <end position="1606"/>
    </location>
</feature>
<feature type="region of interest" description="Malonyl/palmitoyl transferase (MT/PT) domain" evidence="3">
    <location>
        <begin position="1645"/>
        <end position="2005"/>
    </location>
</feature>
<feature type="active site" description="For acetyltransferase activity" evidence="4">
    <location>
        <position position="263"/>
    </location>
</feature>
<feature type="active site" description="For malonyltransferase activity" evidence="4">
    <location>
        <position position="1790"/>
    </location>
</feature>
<sequence length="2014" mass="223241">MEASDQSQAKLTLSFGGIQHAFSVPIEDLSALQDQKDAFLRSRSQASLSETREPCSPAELMLDYLEFLSCRNLPPPLTKPVLLAFSRNFLHNTEIHSLLAKPEYTPQTRRRLVRTYYMAALSAAESHVKESALLDAARQGNFQLAAVFGGQSTANPACVRELAELFAAYTPFLGDLISTAAPTLSALCRLPETKEHFCGRHIDIETWLHDPASIPDGDFIATAPVSCPVVGLLNLAHYAVTCHVLGKTPGELRSHLQGVTGHSQGIVAAVAISLSDSWESFYEAARMTVETLFWIGFECHQRSPRTSVSLDQVQDSLQNGHGRPSCMLSIVGLSRAHIQDILLKLNRSLPEDEQVYLALDNARDSFVVAGPSCSLVHLHTYLRSLKADASIDQTRIPHSLRKPTVQHQFLPISVPFHTPYLQEAARAIKERLFPWRVVSGKLTIPVYDNRTGNDLRKSDNVNLIHTMVDSICWEPCSWPAALGIENISHIVAFGSGGVGELAMRLKDGQGVRVIIGSEFQSRDEEIGTKADLFSPTLLASSTIVGSWGERFRPRLSKSPTGEVKIETKLSRLLDTPPLMVAGMTPTTAAWDFVSAITNAGYHVELAGGGYYDMDAMAVAVKKLVASIPPGRGITCNVIYASPQTLSGQVTLLRRLSSQGLPIDGLTIGAGIPSLEVVSEYIQALGLRHISLKPGSITAIREVIEIAKAHPDFPIILQWTGGRGGGHHSFEDFHAPILRTYGALRRCSNIILVAGSGFGGSEDTYPYLSGTWSAQYGLPAMPFDGILLGSRIMVAKEAHTSPAAKRLITEASGVSDSDWEKTYQEATGGVITVVSEMGQPIHKIATRGVLFWAEMDKTIFSLPRTKRVPELLKRRDYIIKRLNADFAKPWFGQNSKGEPVDLSEMTYIEVLRRLVALMYVSHQSRWIDPSYMTLLMDVSVRILERFSIVDELDDALVLREPHRFVENIVRLCPPAAHDILSPEDVAWFLLRCKARGQKPVNFIPALDDDFETFFKKDSLWQSEDVDALIDQDAGRCCILHGPVAAQYSQDRDEPAKEILDGITQSWIDMIRHDFYPGGVTPSSDSGSLSSESWSVLTPDLTSRDESALLDIIPEMQAYCPSISSLGRSGSPWIHALLSDEFILQGRDRRPNPCRRVFHFGPGGSLQFDRAKSEITVSMENHAGNRSVMRIVCENGADISVDLQQPSAYTDEMVSLPLKFQYDPGMVPVGISEVMEGRNERIKSFYSKVWFGEDICRGMNARSVFHGSEMALTEAMHRDLLSTVSLAYPHSETALSGVDVFPISVGMFPVWDAMARPLVVNDIDGDLLRLVHESNTFEYCEASTPLRVGDVVSSTAAVRAVYIEDAGKHVVVEASIERSGKPVMKVVSTFLFKGVFNDWNSTFKTNKEPELVLDVQSDLDELVLRDREWLLLHDPSQSLVGCSLLFRLETQVTWKNRNTYRSLDVSGLVFLQQASDDLKEIGAVAFHAGECVGNPVLSFLQRKGSPATSPTPLTSPGWPGVSSLEVQLPTSNEMYTRTSRDYNPIHVSPLFSQWADLPGTITQGMYTSAISAAVLEHLALNGDRRRFRRFSARFTDMVLPGDRLLVNVKHVGSIQGRMLFNVSAFKQATNNMVLEAEAELEQPPTAFFFTGQGSQKPNMGMDLYNSSPVAKAIWDEADKYIFETYGWSILDIVKNNPKTLTIHFRGKHGRKIRANYLSMENKTVTPDGQIVKKPILPGLTDQTQSYTFTEPSGLLFFSTFAQPSIVVMEKATFEDMRSKGLIPQSAVFAGHSLGEYGALLAFSGFMSVRNLVDLVFYRGLSMQFAMERDERGETNFGMVAASPQRVGKSDAVFTESHLRSLVQMISIASHELLEMVNLNIENEQYVCAGTDTETQLLLEEMSTTEDRTTTKLYKLILKSIPATKKLPMPIRLQRGRCTIPIPGIDVPFHSSYLRSTVSSYRKILQQYISEEDVHLERLVGRWIPNVTAKPFMADEGYVREVFNITQSPILKEMLEL</sequence>